<name>RRF_POLNA</name>
<proteinExistence type="inferred from homology"/>
<protein>
    <recommendedName>
        <fullName evidence="1">Ribosome-recycling factor</fullName>
        <shortName evidence="1">RRF</shortName>
    </recommendedName>
    <alternativeName>
        <fullName evidence="1">Ribosome-releasing factor</fullName>
    </alternativeName>
</protein>
<sequence>MSIVEIKQQATQKMQQSLESFQHNLTKIRTGRANPGLLDTVHVDYYGSMVPISQVANVALLDARTISVSPWEKGMGAKIEKAIRDSDLGLNPASQGDLIRVPMPAMTEERRKELTKVVRAEGEHAKVAIRNLRRDANDGVKKLVKDKLASEDDERRSQEEIQKFTDRFIADVDKLVTGKEQDIMAV</sequence>
<evidence type="ECO:0000255" key="1">
    <source>
        <dbReference type="HAMAP-Rule" id="MF_00040"/>
    </source>
</evidence>
<dbReference type="EMBL" id="CP000529">
    <property type="protein sequence ID" value="ABM37071.1"/>
    <property type="molecule type" value="Genomic_DNA"/>
</dbReference>
<dbReference type="RefSeq" id="WP_011801152.1">
    <property type="nucleotide sequence ID" value="NC_008781.1"/>
</dbReference>
<dbReference type="SMR" id="A1VN43"/>
<dbReference type="STRING" id="365044.Pnap_1761"/>
<dbReference type="KEGG" id="pna:Pnap_1761"/>
<dbReference type="eggNOG" id="COG0233">
    <property type="taxonomic scope" value="Bacteria"/>
</dbReference>
<dbReference type="HOGENOM" id="CLU_073981_2_0_4"/>
<dbReference type="OrthoDB" id="9804006at2"/>
<dbReference type="Proteomes" id="UP000000644">
    <property type="component" value="Chromosome"/>
</dbReference>
<dbReference type="GO" id="GO:0005829">
    <property type="term" value="C:cytosol"/>
    <property type="evidence" value="ECO:0007669"/>
    <property type="project" value="GOC"/>
</dbReference>
<dbReference type="GO" id="GO:0043023">
    <property type="term" value="F:ribosomal large subunit binding"/>
    <property type="evidence" value="ECO:0007669"/>
    <property type="project" value="TreeGrafter"/>
</dbReference>
<dbReference type="GO" id="GO:0002184">
    <property type="term" value="P:cytoplasmic translational termination"/>
    <property type="evidence" value="ECO:0007669"/>
    <property type="project" value="TreeGrafter"/>
</dbReference>
<dbReference type="CDD" id="cd00520">
    <property type="entry name" value="RRF"/>
    <property type="match status" value="1"/>
</dbReference>
<dbReference type="FunFam" id="1.10.132.20:FF:000001">
    <property type="entry name" value="Ribosome-recycling factor"/>
    <property type="match status" value="1"/>
</dbReference>
<dbReference type="FunFam" id="3.30.1360.40:FF:000001">
    <property type="entry name" value="Ribosome-recycling factor"/>
    <property type="match status" value="1"/>
</dbReference>
<dbReference type="Gene3D" id="3.30.1360.40">
    <property type="match status" value="1"/>
</dbReference>
<dbReference type="Gene3D" id="1.10.132.20">
    <property type="entry name" value="Ribosome-recycling factor"/>
    <property type="match status" value="1"/>
</dbReference>
<dbReference type="HAMAP" id="MF_00040">
    <property type="entry name" value="RRF"/>
    <property type="match status" value="1"/>
</dbReference>
<dbReference type="InterPro" id="IPR002661">
    <property type="entry name" value="Ribosome_recyc_fac"/>
</dbReference>
<dbReference type="InterPro" id="IPR023584">
    <property type="entry name" value="Ribosome_recyc_fac_dom"/>
</dbReference>
<dbReference type="InterPro" id="IPR036191">
    <property type="entry name" value="RRF_sf"/>
</dbReference>
<dbReference type="NCBIfam" id="TIGR00496">
    <property type="entry name" value="frr"/>
    <property type="match status" value="1"/>
</dbReference>
<dbReference type="PANTHER" id="PTHR20982:SF3">
    <property type="entry name" value="MITOCHONDRIAL RIBOSOME RECYCLING FACTOR PSEUDO 1"/>
    <property type="match status" value="1"/>
</dbReference>
<dbReference type="PANTHER" id="PTHR20982">
    <property type="entry name" value="RIBOSOME RECYCLING FACTOR"/>
    <property type="match status" value="1"/>
</dbReference>
<dbReference type="Pfam" id="PF01765">
    <property type="entry name" value="RRF"/>
    <property type="match status" value="1"/>
</dbReference>
<dbReference type="SUPFAM" id="SSF55194">
    <property type="entry name" value="Ribosome recycling factor, RRF"/>
    <property type="match status" value="1"/>
</dbReference>
<gene>
    <name evidence="1" type="primary">frr</name>
    <name type="ordered locus">Pnap_1761</name>
</gene>
<accession>A1VN43</accession>
<feature type="chain" id="PRO_1000003221" description="Ribosome-recycling factor">
    <location>
        <begin position="1"/>
        <end position="186"/>
    </location>
</feature>
<reference key="1">
    <citation type="journal article" date="2009" name="Environ. Microbiol.">
        <title>The genome of Polaromonas naphthalenivorans strain CJ2, isolated from coal tar-contaminated sediment, reveals physiological and metabolic versatility and evolution through extensive horizontal gene transfer.</title>
        <authorList>
            <person name="Yagi J.M."/>
            <person name="Sims D."/>
            <person name="Brettin T."/>
            <person name="Bruce D."/>
            <person name="Madsen E.L."/>
        </authorList>
    </citation>
    <scope>NUCLEOTIDE SEQUENCE [LARGE SCALE GENOMIC DNA]</scope>
    <source>
        <strain>CJ2</strain>
    </source>
</reference>
<keyword id="KW-0963">Cytoplasm</keyword>
<keyword id="KW-0648">Protein biosynthesis</keyword>
<keyword id="KW-1185">Reference proteome</keyword>
<organism>
    <name type="scientific">Polaromonas naphthalenivorans (strain CJ2)</name>
    <dbReference type="NCBI Taxonomy" id="365044"/>
    <lineage>
        <taxon>Bacteria</taxon>
        <taxon>Pseudomonadati</taxon>
        <taxon>Pseudomonadota</taxon>
        <taxon>Betaproteobacteria</taxon>
        <taxon>Burkholderiales</taxon>
        <taxon>Comamonadaceae</taxon>
        <taxon>Polaromonas</taxon>
    </lineage>
</organism>
<comment type="function">
    <text evidence="1">Responsible for the release of ribosomes from messenger RNA at the termination of protein biosynthesis. May increase the efficiency of translation by recycling ribosomes from one round of translation to another.</text>
</comment>
<comment type="subcellular location">
    <subcellularLocation>
        <location evidence="1">Cytoplasm</location>
    </subcellularLocation>
</comment>
<comment type="similarity">
    <text evidence="1">Belongs to the RRF family.</text>
</comment>